<name>RL24_BACVZ</name>
<evidence type="ECO:0000255" key="1">
    <source>
        <dbReference type="HAMAP-Rule" id="MF_01326"/>
    </source>
</evidence>
<evidence type="ECO:0000305" key="2"/>
<keyword id="KW-0687">Ribonucleoprotein</keyword>
<keyword id="KW-0689">Ribosomal protein</keyword>
<keyword id="KW-0694">RNA-binding</keyword>
<keyword id="KW-0699">rRNA-binding</keyword>
<comment type="function">
    <text evidence="1">One of two assembly initiator proteins, it binds directly to the 5'-end of the 23S rRNA, where it nucleates assembly of the 50S subunit.</text>
</comment>
<comment type="function">
    <text evidence="1">One of the proteins that surrounds the polypeptide exit tunnel on the outside of the subunit.</text>
</comment>
<comment type="subunit">
    <text evidence="1">Part of the 50S ribosomal subunit.</text>
</comment>
<comment type="similarity">
    <text evidence="1">Belongs to the universal ribosomal protein uL24 family.</text>
</comment>
<dbReference type="EMBL" id="CP000560">
    <property type="protein sequence ID" value="ABS72575.1"/>
    <property type="molecule type" value="Genomic_DNA"/>
</dbReference>
<dbReference type="RefSeq" id="WP_003156486.1">
    <property type="nucleotide sequence ID" value="NC_009725.2"/>
</dbReference>
<dbReference type="SMR" id="A7Z0P9"/>
<dbReference type="GeneID" id="93079291"/>
<dbReference type="KEGG" id="bay:RBAM_001520"/>
<dbReference type="HOGENOM" id="CLU_093315_2_0_9"/>
<dbReference type="Proteomes" id="UP000001120">
    <property type="component" value="Chromosome"/>
</dbReference>
<dbReference type="GO" id="GO:1990904">
    <property type="term" value="C:ribonucleoprotein complex"/>
    <property type="evidence" value="ECO:0007669"/>
    <property type="project" value="UniProtKB-KW"/>
</dbReference>
<dbReference type="GO" id="GO:0005840">
    <property type="term" value="C:ribosome"/>
    <property type="evidence" value="ECO:0007669"/>
    <property type="project" value="UniProtKB-KW"/>
</dbReference>
<dbReference type="GO" id="GO:0019843">
    <property type="term" value="F:rRNA binding"/>
    <property type="evidence" value="ECO:0007669"/>
    <property type="project" value="UniProtKB-UniRule"/>
</dbReference>
<dbReference type="GO" id="GO:0003735">
    <property type="term" value="F:structural constituent of ribosome"/>
    <property type="evidence" value="ECO:0007669"/>
    <property type="project" value="InterPro"/>
</dbReference>
<dbReference type="GO" id="GO:0006412">
    <property type="term" value="P:translation"/>
    <property type="evidence" value="ECO:0007669"/>
    <property type="project" value="UniProtKB-UniRule"/>
</dbReference>
<dbReference type="CDD" id="cd06089">
    <property type="entry name" value="KOW_RPL26"/>
    <property type="match status" value="1"/>
</dbReference>
<dbReference type="FunFam" id="2.30.30.30:FF:000004">
    <property type="entry name" value="50S ribosomal protein L24"/>
    <property type="match status" value="1"/>
</dbReference>
<dbReference type="Gene3D" id="2.30.30.30">
    <property type="match status" value="1"/>
</dbReference>
<dbReference type="HAMAP" id="MF_01326_B">
    <property type="entry name" value="Ribosomal_uL24_B"/>
    <property type="match status" value="1"/>
</dbReference>
<dbReference type="InterPro" id="IPR005824">
    <property type="entry name" value="KOW"/>
</dbReference>
<dbReference type="InterPro" id="IPR014722">
    <property type="entry name" value="Rib_uL2_dom2"/>
</dbReference>
<dbReference type="InterPro" id="IPR003256">
    <property type="entry name" value="Ribosomal_uL24"/>
</dbReference>
<dbReference type="InterPro" id="IPR005825">
    <property type="entry name" value="Ribosomal_uL24_CS"/>
</dbReference>
<dbReference type="InterPro" id="IPR041988">
    <property type="entry name" value="Ribosomal_uL24_KOW"/>
</dbReference>
<dbReference type="InterPro" id="IPR008991">
    <property type="entry name" value="Translation_prot_SH3-like_sf"/>
</dbReference>
<dbReference type="NCBIfam" id="TIGR01079">
    <property type="entry name" value="rplX_bact"/>
    <property type="match status" value="1"/>
</dbReference>
<dbReference type="PANTHER" id="PTHR12903">
    <property type="entry name" value="MITOCHONDRIAL RIBOSOMAL PROTEIN L24"/>
    <property type="match status" value="1"/>
</dbReference>
<dbReference type="Pfam" id="PF00467">
    <property type="entry name" value="KOW"/>
    <property type="match status" value="1"/>
</dbReference>
<dbReference type="Pfam" id="PF17136">
    <property type="entry name" value="ribosomal_L24"/>
    <property type="match status" value="1"/>
</dbReference>
<dbReference type="SMART" id="SM00739">
    <property type="entry name" value="KOW"/>
    <property type="match status" value="1"/>
</dbReference>
<dbReference type="SUPFAM" id="SSF50104">
    <property type="entry name" value="Translation proteins SH3-like domain"/>
    <property type="match status" value="1"/>
</dbReference>
<dbReference type="PROSITE" id="PS01108">
    <property type="entry name" value="RIBOSOMAL_L24"/>
    <property type="match status" value="1"/>
</dbReference>
<organism>
    <name type="scientific">Bacillus velezensis (strain DSM 23117 / BGSC 10A6 / LMG 26770 / FZB42)</name>
    <name type="common">Bacillus amyloliquefaciens subsp. plantarum</name>
    <dbReference type="NCBI Taxonomy" id="326423"/>
    <lineage>
        <taxon>Bacteria</taxon>
        <taxon>Bacillati</taxon>
        <taxon>Bacillota</taxon>
        <taxon>Bacilli</taxon>
        <taxon>Bacillales</taxon>
        <taxon>Bacillaceae</taxon>
        <taxon>Bacillus</taxon>
        <taxon>Bacillus amyloliquefaciens group</taxon>
    </lineage>
</organism>
<protein>
    <recommendedName>
        <fullName evidence="1">Large ribosomal subunit protein uL24</fullName>
    </recommendedName>
    <alternativeName>
        <fullName evidence="2">50S ribosomal protein L24</fullName>
    </alternativeName>
</protein>
<reference key="1">
    <citation type="journal article" date="2007" name="Nat. Biotechnol.">
        <title>Comparative analysis of the complete genome sequence of the plant growth-promoting bacterium Bacillus amyloliquefaciens FZB42.</title>
        <authorList>
            <person name="Chen X.H."/>
            <person name="Koumoutsi A."/>
            <person name="Scholz R."/>
            <person name="Eisenreich A."/>
            <person name="Schneider K."/>
            <person name="Heinemeyer I."/>
            <person name="Morgenstern B."/>
            <person name="Voss B."/>
            <person name="Hess W.R."/>
            <person name="Reva O."/>
            <person name="Junge H."/>
            <person name="Voigt B."/>
            <person name="Jungblut P.R."/>
            <person name="Vater J."/>
            <person name="Suessmuth R."/>
            <person name="Liesegang H."/>
            <person name="Strittmatter A."/>
            <person name="Gottschalk G."/>
            <person name="Borriss R."/>
        </authorList>
    </citation>
    <scope>NUCLEOTIDE SEQUENCE [LARGE SCALE GENOMIC DNA]</scope>
    <source>
        <strain>DSM 23117 / BGSC 10A6 / LMG 26770 / FZB42</strain>
    </source>
</reference>
<accession>A7Z0P9</accession>
<gene>
    <name evidence="1" type="primary">rplX</name>
    <name type="ordered locus">RBAM_001520</name>
</gene>
<sequence length="103" mass="11142">MHVKKGDKVMVISGKDKGKQGTILAAFPKKDRVLVEGVNMVKKHSKPTQANPQGGISNQEAPIHVSNVMPLDPKTGEVTRVGYKVEDGKKVRVAKKSGQVLDK</sequence>
<proteinExistence type="inferred from homology"/>
<feature type="chain" id="PRO_1000052182" description="Large ribosomal subunit protein uL24">
    <location>
        <begin position="1"/>
        <end position="103"/>
    </location>
</feature>